<name>VIUA_VIBCH</name>
<sequence>MAVLCPARVSVAENKKFKLHTLSAMMMGLFTGSFAYAETQNTSNQEQEMPVLVVIGEKTQRSIYETSASVEVFDQDTIERTPGATEIDDLLQLIPNLVDSGQSNNMPTIRGIDGSGPSVGGLASFAGTSPRLNMSIDGRSLTYSEIAFGPRSLWDMQQVEIYLGPQSYIQGRNTSAGAIVMKSNDPTHHFESAVKAGIGESDYSQTAGMISAPIIQDELAFRLSFDQQKRDSFVDLAAFEPAGDPKKIEMNSVRGKLLYEPSALDGFKTTLTLSHMDSRGPQTENINVAGNEAFRPVYETASFTTAWDIIWHLNDLFTFENNLVYADFSYDRYTNPNSRGDFNTDGKEFHIEPLLRYIALDGSVNTLIGARYYQSSQDDMYIDAASAYPMDGRTKAKSVFAEVTYALTPSINVNLAGRFEREQVKRNVSHPRYKLDYDETSSVFLPKLDVAYTPVQGQTYGIKAAKGYNASGAGLAFNSMQFTGFRPYEFEQESIWNYEFYTRHRFSHSVEVLTNLFYNDFDSMQMTQTTSSGDVFIANLDEASTYGAEIGSRWYATSSLELFANLGLLKTEFKETTGNTKELPRAPKMSANVGLLYDFGQGFEFSSNAAYTGSYFSESGNSEKFAIDSYWVANAQLAYVFEHGRATLYATNLLDSDKTTLYLSTNNTLDQLKQQPRMIGASVQLNF</sequence>
<reference key="1">
    <citation type="journal article" date="2000" name="Nature">
        <title>DNA sequence of both chromosomes of the cholera pathogen Vibrio cholerae.</title>
        <authorList>
            <person name="Heidelberg J.F."/>
            <person name="Eisen J.A."/>
            <person name="Nelson W.C."/>
            <person name="Clayton R.A."/>
            <person name="Gwinn M.L."/>
            <person name="Dodson R.J."/>
            <person name="Haft D.H."/>
            <person name="Hickey E.K."/>
            <person name="Peterson J.D."/>
            <person name="Umayam L.A."/>
            <person name="Gill S.R."/>
            <person name="Nelson K.E."/>
            <person name="Read T.D."/>
            <person name="Tettelin H."/>
            <person name="Richardson D.L."/>
            <person name="Ermolaeva M.D."/>
            <person name="Vamathevan J.J."/>
            <person name="Bass S."/>
            <person name="Qin H."/>
            <person name="Dragoi I."/>
            <person name="Sellers P."/>
            <person name="McDonald L.A."/>
            <person name="Utterback T.R."/>
            <person name="Fleischmann R.D."/>
            <person name="Nierman W.C."/>
            <person name="White O."/>
            <person name="Salzberg S.L."/>
            <person name="Smith H.O."/>
            <person name="Colwell R.R."/>
            <person name="Mekalanos J.J."/>
            <person name="Venter J.C."/>
            <person name="Fraser C.M."/>
        </authorList>
    </citation>
    <scope>NUCLEOTIDE SEQUENCE [LARGE SCALE GENOMIC DNA]</scope>
    <source>
        <strain>ATCC 39315 / El Tor Inaba N16961</strain>
    </source>
</reference>
<gene>
    <name type="primary">viuA</name>
    <name type="ordered locus">VC_2211</name>
</gene>
<dbReference type="EMBL" id="AE003852">
    <property type="protein sequence ID" value="AAF95355.1"/>
    <property type="molecule type" value="Genomic_DNA"/>
</dbReference>
<dbReference type="PIR" id="A41905">
    <property type="entry name" value="A41905"/>
</dbReference>
<dbReference type="RefSeq" id="NP_231842.1">
    <property type="nucleotide sequence ID" value="NC_002505.1"/>
</dbReference>
<dbReference type="RefSeq" id="WP_000279435.1">
    <property type="nucleotide sequence ID" value="NZ_LT906614.1"/>
</dbReference>
<dbReference type="SMR" id="P0C6R1"/>
<dbReference type="STRING" id="243277.VC_2211"/>
<dbReference type="DNASU" id="2613250"/>
<dbReference type="EnsemblBacteria" id="AAF95355">
    <property type="protein sequence ID" value="AAF95355"/>
    <property type="gene ID" value="VC_2211"/>
</dbReference>
<dbReference type="KEGG" id="vch:VC_2211"/>
<dbReference type="PATRIC" id="fig|243277.26.peg.2109"/>
<dbReference type="eggNOG" id="COG1629">
    <property type="taxonomic scope" value="Bacteria"/>
</dbReference>
<dbReference type="eggNOG" id="COG4774">
    <property type="taxonomic scope" value="Bacteria"/>
</dbReference>
<dbReference type="HOGENOM" id="CLU_008287_15_2_6"/>
<dbReference type="Proteomes" id="UP000000584">
    <property type="component" value="Chromosome 1"/>
</dbReference>
<dbReference type="GO" id="GO:0009279">
    <property type="term" value="C:cell outer membrane"/>
    <property type="evidence" value="ECO:0000318"/>
    <property type="project" value="GO_Central"/>
</dbReference>
<dbReference type="GO" id="GO:0015092">
    <property type="term" value="F:high-affinity ferric iron transmembrane transporter activity"/>
    <property type="evidence" value="ECO:0000250"/>
    <property type="project" value="UniProtKB"/>
</dbReference>
<dbReference type="GO" id="GO:0015344">
    <property type="term" value="F:siderophore uptake transmembrane transporter activity"/>
    <property type="evidence" value="ECO:0000250"/>
    <property type="project" value="UniProtKB"/>
</dbReference>
<dbReference type="GO" id="GO:0015343">
    <property type="term" value="F:siderophore-iron transmembrane transporter activity"/>
    <property type="evidence" value="ECO:0000250"/>
    <property type="project" value="UniProtKB"/>
</dbReference>
<dbReference type="GO" id="GO:0038023">
    <property type="term" value="F:signaling receptor activity"/>
    <property type="evidence" value="ECO:0007669"/>
    <property type="project" value="InterPro"/>
</dbReference>
<dbReference type="GO" id="GO:0034755">
    <property type="term" value="P:iron ion transmembrane transport"/>
    <property type="evidence" value="ECO:0000250"/>
    <property type="project" value="UniProtKB"/>
</dbReference>
<dbReference type="GO" id="GO:0044718">
    <property type="term" value="P:siderophore transmembrane transport"/>
    <property type="evidence" value="ECO:0000318"/>
    <property type="project" value="GO_Central"/>
</dbReference>
<dbReference type="GO" id="GO:0033214">
    <property type="term" value="P:siderophore-dependent iron import into cell"/>
    <property type="evidence" value="ECO:0000250"/>
    <property type="project" value="UniProtKB"/>
</dbReference>
<dbReference type="Gene3D" id="2.40.170.20">
    <property type="entry name" value="TonB-dependent receptor, beta-barrel domain"/>
    <property type="match status" value="1"/>
</dbReference>
<dbReference type="InterPro" id="IPR012910">
    <property type="entry name" value="Plug_dom"/>
</dbReference>
<dbReference type="InterPro" id="IPR039426">
    <property type="entry name" value="TonB-dep_rcpt-like"/>
</dbReference>
<dbReference type="InterPro" id="IPR000531">
    <property type="entry name" value="TonB-dep_rcpt_b-brl"/>
</dbReference>
<dbReference type="InterPro" id="IPR036942">
    <property type="entry name" value="TonB_rcpt_b-brl_sf"/>
</dbReference>
<dbReference type="InterPro" id="IPR010105">
    <property type="entry name" value="TonB_sidphr_rcpt"/>
</dbReference>
<dbReference type="NCBIfam" id="TIGR01783">
    <property type="entry name" value="TonB-siderophor"/>
    <property type="match status" value="1"/>
</dbReference>
<dbReference type="PANTHER" id="PTHR32552">
    <property type="entry name" value="FERRICHROME IRON RECEPTOR-RELATED"/>
    <property type="match status" value="1"/>
</dbReference>
<dbReference type="PANTHER" id="PTHR32552:SF81">
    <property type="entry name" value="TONB-DEPENDENT OUTER MEMBRANE RECEPTOR"/>
    <property type="match status" value="1"/>
</dbReference>
<dbReference type="Pfam" id="PF07715">
    <property type="entry name" value="Plug"/>
    <property type="match status" value="1"/>
</dbReference>
<dbReference type="Pfam" id="PF00593">
    <property type="entry name" value="TonB_dep_Rec_b-barrel"/>
    <property type="match status" value="1"/>
</dbReference>
<dbReference type="SUPFAM" id="SSF56935">
    <property type="entry name" value="Porins"/>
    <property type="match status" value="1"/>
</dbReference>
<dbReference type="PROSITE" id="PS52016">
    <property type="entry name" value="TONB_DEPENDENT_REC_3"/>
    <property type="match status" value="1"/>
</dbReference>
<comment type="function">
    <text evidence="2 4">Involved in the uptake of iron in complex with vibriobactin, a catecholate siderophore synthesized by V.cholerae. Binds and transports ferric vibriobactin across the outer membrane (By similarity). The energy source is provided by the inner membrane TonB system (Probable).</text>
</comment>
<comment type="subcellular location">
    <subcellularLocation>
        <location evidence="2 3">Cell outer membrane</location>
        <topology evidence="3">Multi-pass membrane protein</topology>
    </subcellularLocation>
</comment>
<comment type="similarity">
    <text evidence="4">Belongs to the TonB-dependent receptor family.</text>
</comment>
<accession>P0C6R1</accession>
<accession>Q00964</accession>
<accession>Q9JQ00</accession>
<feature type="signal peptide" evidence="1">
    <location>
        <begin position="1"/>
        <end position="37"/>
    </location>
</feature>
<feature type="chain" id="PRO_0000034777" description="Ferric vibriobactin receptor ViuA">
    <location>
        <begin position="38"/>
        <end position="687"/>
    </location>
</feature>
<feature type="domain" description="TBDR plug" evidence="3">
    <location>
        <begin position="62"/>
        <end position="184"/>
    </location>
</feature>
<feature type="domain" description="TBDR beta-barrel" evidence="3">
    <location>
        <begin position="189"/>
        <end position="687"/>
    </location>
</feature>
<proteinExistence type="inferred from homology"/>
<protein>
    <recommendedName>
        <fullName evidence="4">Ferric vibriobactin receptor ViuA</fullName>
    </recommendedName>
    <alternativeName>
        <fullName evidence="4">Vibriobactin uptake protein A</fullName>
    </alternativeName>
</protein>
<organism>
    <name type="scientific">Vibrio cholerae serotype O1 (strain ATCC 39315 / El Tor Inaba N16961)</name>
    <dbReference type="NCBI Taxonomy" id="243277"/>
    <lineage>
        <taxon>Bacteria</taxon>
        <taxon>Pseudomonadati</taxon>
        <taxon>Pseudomonadota</taxon>
        <taxon>Gammaproteobacteria</taxon>
        <taxon>Vibrionales</taxon>
        <taxon>Vibrionaceae</taxon>
        <taxon>Vibrio</taxon>
    </lineage>
</organism>
<keyword id="KW-0998">Cell outer membrane</keyword>
<keyword id="KW-0406">Ion transport</keyword>
<keyword id="KW-0408">Iron</keyword>
<keyword id="KW-0410">Iron transport</keyword>
<keyword id="KW-0472">Membrane</keyword>
<keyword id="KW-0675">Receptor</keyword>
<keyword id="KW-1185">Reference proteome</keyword>
<keyword id="KW-0732">Signal</keyword>
<keyword id="KW-0798">TonB box</keyword>
<keyword id="KW-0812">Transmembrane</keyword>
<keyword id="KW-1134">Transmembrane beta strand</keyword>
<keyword id="KW-0813">Transport</keyword>
<evidence type="ECO:0000250" key="1"/>
<evidence type="ECO:0000250" key="2">
    <source>
        <dbReference type="UniProtKB" id="A5F661"/>
    </source>
</evidence>
<evidence type="ECO:0000255" key="3">
    <source>
        <dbReference type="PROSITE-ProRule" id="PRU01360"/>
    </source>
</evidence>
<evidence type="ECO:0000305" key="4"/>